<proteinExistence type="inferred from homology"/>
<gene>
    <name evidence="1" type="primary">rpoB</name>
</gene>
<name>RPOB_PHAVU</name>
<evidence type="ECO:0000255" key="1">
    <source>
        <dbReference type="HAMAP-Rule" id="MF_01321"/>
    </source>
</evidence>
<sequence length="1070" mass="120609">MLGSGNEEMSTLPGLNQIQLEGFCRFIDRGLTEGLFKFPKIEDTDQEIEFQLFAETYQLLEPLINEKDAVYESLTYSAELYVSTGLIWKSSRDIKKQTIFVGNIPLMNSLGTSIVNGIYRIVINQILQSPGIYYRSELDPNGISVYTGTIISDWGGRLELEIDKKARIWARVSRKQKISILILLSAMGSNLSEILENVCYPEIFVSFLNDKDKKKIGSKENAILEFYRQFACVGGDPVFSESLWKELQKKFFQQRCELGRIGRRNMNQKLNLDIPQNNTFLLPRDILTAASHLIGMKFGMALLDDINHLKNKRIRSVADLLQDQFGLALVRLENMVRGTICGAIRHKLIPTPQNLVTSTPLTTTYESFFGLHPLSQVLDQTNPLTEIVHGRKLSYLGPGGLTGRTASFRIRDIHPSHYGRICPIDTSEGINVGLIGSLAIHARIGIWGAIESPFFEISERSKRIRMLYLSPSIDEYYMVATGNSLALTRDIQEEQIVPARYRQEFLTIAWEQVHLRSIYPFQYFSIGASLIPFIEHNDANRALMSSNMQRQAVPLSQSEKCIVGTGLECQVALDSGVSAIADHEGNIVYTDTDRIFLFVNGDTLSIPLTIYQRSNKNTCMHQKPQVHRGKFIKKGQILADGAATVGGELALGKNVLVAYMPWEGYNSEDAVLISERLVYEDIFTSFHIRKYEIQTHMTSYGSERITNKIPHLEANLLRNLDKNGIVILGSWVETGDVLVGKLTPQMAKESSYSPEDRLLRAILGIQVSTSKETCLKLPIGGRGRVIDVRWIQKKGGSSYNPETIRISILQKREIKVGDKVAGRHGNKGIVSKILSRQDMPYLQDGEPVDMVFNPLGVPSRMNVGQIFECSLGLSGGMLDKHYRITPFDERYEQEASRKLVFSELYEASKKTSNPWIFEPEYPGKSKIFDGRTGNSFKQPAIMGKTYILKLIHQVDDKIHGRSSGHYALVTQQPLRGRAKQGGQRVGEMEVWALEGFGVAHILQEMLTYKSDHIKTRQEVLGTTIIGGTIPKPTDAPESFRLLVRELRSLAMELNHFLVSEKNFRIHRKEA</sequence>
<keyword id="KW-0150">Chloroplast</keyword>
<keyword id="KW-0240">DNA-directed RNA polymerase</keyword>
<keyword id="KW-0548">Nucleotidyltransferase</keyword>
<keyword id="KW-0934">Plastid</keyword>
<keyword id="KW-0804">Transcription</keyword>
<keyword id="KW-0808">Transferase</keyword>
<protein>
    <recommendedName>
        <fullName evidence="1">DNA-directed RNA polymerase subunit beta</fullName>
        <ecNumber evidence="1">2.7.7.6</ecNumber>
    </recommendedName>
    <alternativeName>
        <fullName evidence="1">PEP</fullName>
    </alternativeName>
    <alternativeName>
        <fullName evidence="1">Plastid-encoded RNA polymerase subunit beta</fullName>
        <shortName evidence="1">RNA polymerase subunit beta</shortName>
    </alternativeName>
</protein>
<organism>
    <name type="scientific">Phaseolus vulgaris</name>
    <name type="common">Kidney bean</name>
    <name type="synonym">French bean</name>
    <dbReference type="NCBI Taxonomy" id="3885"/>
    <lineage>
        <taxon>Eukaryota</taxon>
        <taxon>Viridiplantae</taxon>
        <taxon>Streptophyta</taxon>
        <taxon>Embryophyta</taxon>
        <taxon>Tracheophyta</taxon>
        <taxon>Spermatophyta</taxon>
        <taxon>Magnoliopsida</taxon>
        <taxon>eudicotyledons</taxon>
        <taxon>Gunneridae</taxon>
        <taxon>Pentapetalae</taxon>
        <taxon>rosids</taxon>
        <taxon>fabids</taxon>
        <taxon>Fabales</taxon>
        <taxon>Fabaceae</taxon>
        <taxon>Papilionoideae</taxon>
        <taxon>50 kb inversion clade</taxon>
        <taxon>NPAAA clade</taxon>
        <taxon>indigoferoid/millettioid clade</taxon>
        <taxon>Phaseoleae</taxon>
        <taxon>Phaseolus</taxon>
    </lineage>
</organism>
<reference key="1">
    <citation type="journal article" date="2007" name="BMC Genomics">
        <title>Rapid evolutionary change of common bean (Phaseolus vulgaris L) plastome, and the genomic diversification of legume chloroplasts.</title>
        <authorList>
            <person name="Guo X."/>
            <person name="Castillo-Ramirez S."/>
            <person name="Gonzalez V."/>
            <person name="Bustos P."/>
            <person name="Fernandez-Vazquez J.L."/>
            <person name="Santamaria R.I."/>
            <person name="Arellano J."/>
            <person name="Cevallos M.A."/>
            <person name="Davila G."/>
        </authorList>
    </citation>
    <scope>NUCLEOTIDE SEQUENCE [LARGE SCALE GENOMIC DNA]</scope>
    <source>
        <strain>cv. Negro Jamapa</strain>
    </source>
</reference>
<reference key="2">
    <citation type="submission" date="2007-10" db="EMBL/GenBank/DDBJ databases">
        <title>Complete nucleotide sequence of the plastid genome of the common bean, Phaseolus vulgaris.</title>
        <authorList>
            <person name="Moore M.J."/>
            <person name="Triplett E.W."/>
            <person name="Broughton W.J."/>
            <person name="Soltis P.S."/>
            <person name="Soltis D.E."/>
        </authorList>
    </citation>
    <scope>NUCLEOTIDE SEQUENCE [LARGE SCALE GENOMIC DNA]</scope>
</reference>
<feature type="chain" id="PRO_0000300451" description="DNA-directed RNA polymerase subunit beta">
    <location>
        <begin position="1"/>
        <end position="1070"/>
    </location>
</feature>
<comment type="function">
    <text evidence="1">DNA-dependent RNA polymerase catalyzes the transcription of DNA into RNA using the four ribonucleoside triphosphates as substrates.</text>
</comment>
<comment type="catalytic activity">
    <reaction evidence="1">
        <text>RNA(n) + a ribonucleoside 5'-triphosphate = RNA(n+1) + diphosphate</text>
        <dbReference type="Rhea" id="RHEA:21248"/>
        <dbReference type="Rhea" id="RHEA-COMP:14527"/>
        <dbReference type="Rhea" id="RHEA-COMP:17342"/>
        <dbReference type="ChEBI" id="CHEBI:33019"/>
        <dbReference type="ChEBI" id="CHEBI:61557"/>
        <dbReference type="ChEBI" id="CHEBI:140395"/>
        <dbReference type="EC" id="2.7.7.6"/>
    </reaction>
</comment>
<comment type="subunit">
    <text evidence="1">In plastids the minimal PEP RNA polymerase catalytic core is composed of four subunits: alpha, beta, beta', and beta''. When a (nuclear-encoded) sigma factor is associated with the core the holoenzyme is formed, which can initiate transcription.</text>
</comment>
<comment type="subcellular location">
    <subcellularLocation>
        <location>Plastid</location>
        <location>Chloroplast</location>
    </subcellularLocation>
</comment>
<comment type="similarity">
    <text evidence="1">Belongs to the RNA polymerase beta chain family.</text>
</comment>
<dbReference type="EC" id="2.7.7.6" evidence="1"/>
<dbReference type="EMBL" id="DQ886273">
    <property type="protein sequence ID" value="ABH88086.1"/>
    <property type="molecule type" value="Genomic_DNA"/>
</dbReference>
<dbReference type="EMBL" id="EU196765">
    <property type="protein sequence ID" value="ABW22782.1"/>
    <property type="molecule type" value="Genomic_DNA"/>
</dbReference>
<dbReference type="RefSeq" id="YP_001122806.1">
    <property type="nucleotide sequence ID" value="NC_009259.1"/>
</dbReference>
<dbReference type="SMR" id="A4GGA5"/>
<dbReference type="GeneID" id="4961795"/>
<dbReference type="KEGG" id="pvu:4961795"/>
<dbReference type="eggNOG" id="KOG0214">
    <property type="taxonomic scope" value="Eukaryota"/>
</dbReference>
<dbReference type="PhylomeDB" id="A4GGA5"/>
<dbReference type="GO" id="GO:0009507">
    <property type="term" value="C:chloroplast"/>
    <property type="evidence" value="ECO:0007669"/>
    <property type="project" value="UniProtKB-SubCell"/>
</dbReference>
<dbReference type="GO" id="GO:0000428">
    <property type="term" value="C:DNA-directed RNA polymerase complex"/>
    <property type="evidence" value="ECO:0007669"/>
    <property type="project" value="UniProtKB-KW"/>
</dbReference>
<dbReference type="GO" id="GO:0005739">
    <property type="term" value="C:mitochondrion"/>
    <property type="evidence" value="ECO:0007669"/>
    <property type="project" value="GOC"/>
</dbReference>
<dbReference type="GO" id="GO:0003677">
    <property type="term" value="F:DNA binding"/>
    <property type="evidence" value="ECO:0007669"/>
    <property type="project" value="UniProtKB-UniRule"/>
</dbReference>
<dbReference type="GO" id="GO:0003899">
    <property type="term" value="F:DNA-directed RNA polymerase activity"/>
    <property type="evidence" value="ECO:0007669"/>
    <property type="project" value="UniProtKB-UniRule"/>
</dbReference>
<dbReference type="GO" id="GO:0032549">
    <property type="term" value="F:ribonucleoside binding"/>
    <property type="evidence" value="ECO:0007669"/>
    <property type="project" value="InterPro"/>
</dbReference>
<dbReference type="GO" id="GO:0006351">
    <property type="term" value="P:DNA-templated transcription"/>
    <property type="evidence" value="ECO:0007669"/>
    <property type="project" value="UniProtKB-UniRule"/>
</dbReference>
<dbReference type="CDD" id="cd00653">
    <property type="entry name" value="RNA_pol_B_RPB2"/>
    <property type="match status" value="1"/>
</dbReference>
<dbReference type="Gene3D" id="2.40.50.100">
    <property type="match status" value="1"/>
</dbReference>
<dbReference type="Gene3D" id="2.40.50.150">
    <property type="match status" value="1"/>
</dbReference>
<dbReference type="Gene3D" id="3.90.1100.10">
    <property type="match status" value="1"/>
</dbReference>
<dbReference type="Gene3D" id="2.30.150.10">
    <property type="entry name" value="DNA-directed RNA polymerase, beta subunit, external 1 domain"/>
    <property type="match status" value="1"/>
</dbReference>
<dbReference type="Gene3D" id="2.40.270.10">
    <property type="entry name" value="DNA-directed RNA polymerase, subunit 2, domain 6"/>
    <property type="match status" value="2"/>
</dbReference>
<dbReference type="Gene3D" id="3.90.1800.10">
    <property type="entry name" value="RNA polymerase alpha subunit dimerisation domain"/>
    <property type="match status" value="1"/>
</dbReference>
<dbReference type="Gene3D" id="3.90.1110.10">
    <property type="entry name" value="RNA polymerase Rpb2, domain 2"/>
    <property type="match status" value="1"/>
</dbReference>
<dbReference type="HAMAP" id="MF_01321">
    <property type="entry name" value="RNApol_bact_RpoB"/>
    <property type="match status" value="1"/>
</dbReference>
<dbReference type="InterPro" id="IPR042107">
    <property type="entry name" value="DNA-dir_RNA_pol_bsu_ext_1_sf"/>
</dbReference>
<dbReference type="InterPro" id="IPR015712">
    <property type="entry name" value="DNA-dir_RNA_pol_su2"/>
</dbReference>
<dbReference type="InterPro" id="IPR007120">
    <property type="entry name" value="DNA-dir_RNAP_su2_dom"/>
</dbReference>
<dbReference type="InterPro" id="IPR037033">
    <property type="entry name" value="DNA-dir_RNAP_su2_hyb_sf"/>
</dbReference>
<dbReference type="InterPro" id="IPR010243">
    <property type="entry name" value="RNA_pol_bsu_bac"/>
</dbReference>
<dbReference type="InterPro" id="IPR007121">
    <property type="entry name" value="RNA_pol_bsu_CS"/>
</dbReference>
<dbReference type="InterPro" id="IPR007642">
    <property type="entry name" value="RNA_pol_Rpb2_2"/>
</dbReference>
<dbReference type="InterPro" id="IPR037034">
    <property type="entry name" value="RNA_pol_Rpb2_2_sf"/>
</dbReference>
<dbReference type="InterPro" id="IPR007645">
    <property type="entry name" value="RNA_pol_Rpb2_3"/>
</dbReference>
<dbReference type="InterPro" id="IPR007641">
    <property type="entry name" value="RNA_pol_Rpb2_7"/>
</dbReference>
<dbReference type="InterPro" id="IPR014724">
    <property type="entry name" value="RNA_pol_RPB2_OB-fold"/>
</dbReference>
<dbReference type="NCBIfam" id="NF001616">
    <property type="entry name" value="PRK00405.1"/>
    <property type="match status" value="1"/>
</dbReference>
<dbReference type="PANTHER" id="PTHR20856">
    <property type="entry name" value="DNA-DIRECTED RNA POLYMERASE I SUBUNIT 2"/>
    <property type="match status" value="1"/>
</dbReference>
<dbReference type="Pfam" id="PF04561">
    <property type="entry name" value="RNA_pol_Rpb2_2"/>
    <property type="match status" value="1"/>
</dbReference>
<dbReference type="Pfam" id="PF04565">
    <property type="entry name" value="RNA_pol_Rpb2_3"/>
    <property type="match status" value="1"/>
</dbReference>
<dbReference type="Pfam" id="PF00562">
    <property type="entry name" value="RNA_pol_Rpb2_6"/>
    <property type="match status" value="1"/>
</dbReference>
<dbReference type="Pfam" id="PF04560">
    <property type="entry name" value="RNA_pol_Rpb2_7"/>
    <property type="match status" value="1"/>
</dbReference>
<dbReference type="SUPFAM" id="SSF64484">
    <property type="entry name" value="beta and beta-prime subunits of DNA dependent RNA-polymerase"/>
    <property type="match status" value="1"/>
</dbReference>
<dbReference type="PROSITE" id="PS01166">
    <property type="entry name" value="RNA_POL_BETA"/>
    <property type="match status" value="1"/>
</dbReference>
<geneLocation type="chloroplast"/>
<accession>A4GGA5</accession>
<accession>A8W812</accession>